<organism>
    <name type="scientific">Mus musculus</name>
    <name type="common">Mouse</name>
    <dbReference type="NCBI Taxonomy" id="10090"/>
    <lineage>
        <taxon>Eukaryota</taxon>
        <taxon>Metazoa</taxon>
        <taxon>Chordata</taxon>
        <taxon>Craniata</taxon>
        <taxon>Vertebrata</taxon>
        <taxon>Euteleostomi</taxon>
        <taxon>Mammalia</taxon>
        <taxon>Eutheria</taxon>
        <taxon>Euarchontoglires</taxon>
        <taxon>Glires</taxon>
        <taxon>Rodentia</taxon>
        <taxon>Myomorpha</taxon>
        <taxon>Muroidea</taxon>
        <taxon>Muridae</taxon>
        <taxon>Murinae</taxon>
        <taxon>Mus</taxon>
        <taxon>Mus</taxon>
    </lineage>
</organism>
<reference key="1">
    <citation type="journal article" date="2002" name="Genomics">
        <title>Cloning and characterization of a novel apolipoprotein A-I-binding protein, AI-BP, secreted by cells of the kidney proximal tubules in response to HDL or ApoA-I.</title>
        <authorList>
            <person name="Ritter M."/>
            <person name="Buechler C."/>
            <person name="Boettcher A."/>
            <person name="Barlage S."/>
            <person name="Schmitz-Madry A."/>
            <person name="Orso E."/>
            <person name="Bared S.M."/>
            <person name="Schmiedeknecht G."/>
            <person name="Baehr C.H."/>
            <person name="Fricker G."/>
            <person name="Schmitz G."/>
        </authorList>
    </citation>
    <scope>NUCLEOTIDE SEQUENCE [MRNA]</scope>
    <source>
        <strain>Swiss Webster</strain>
    </source>
</reference>
<reference key="2">
    <citation type="journal article" date="2008" name="Endocrinology">
        <title>Biochemical and structural characterization of apolipoprotein A-I binding protein, a novel phosphoprotein with a potential role in sperm capacitation.</title>
        <authorList>
            <person name="Jha K.N."/>
            <person name="Shumilin I.A."/>
            <person name="Digilio L.C."/>
            <person name="Chertihin O."/>
            <person name="Zheng H."/>
            <person name="Schmitz G."/>
            <person name="Visconti P.E."/>
            <person name="Flickinger C.J."/>
            <person name="Minor W."/>
            <person name="Herr J.C."/>
        </authorList>
    </citation>
    <scope>NUCLEOTIDE SEQUENCE [MRNA]</scope>
    <scope>X-RAY CRYSTALLOGRAPHY (2.0 ANGSTROMS) OF 25-282</scope>
    <scope>SUBUNIT</scope>
    <scope>PHOSPHORYLATION AT SER-43</scope>
    <scope>SUBCELLULAR LOCATION</scope>
    <scope>TISSUE SPECIFICITY</scope>
    <source>
        <strain>BALB/cJ</strain>
        <tissue>Testis</tissue>
    </source>
</reference>
<reference key="3">
    <citation type="journal article" date="2005" name="Science">
        <title>The transcriptional landscape of the mammalian genome.</title>
        <authorList>
            <person name="Carninci P."/>
            <person name="Kasukawa T."/>
            <person name="Katayama S."/>
            <person name="Gough J."/>
            <person name="Frith M.C."/>
            <person name="Maeda N."/>
            <person name="Oyama R."/>
            <person name="Ravasi T."/>
            <person name="Lenhard B."/>
            <person name="Wells C."/>
            <person name="Kodzius R."/>
            <person name="Shimokawa K."/>
            <person name="Bajic V.B."/>
            <person name="Brenner S.E."/>
            <person name="Batalov S."/>
            <person name="Forrest A.R."/>
            <person name="Zavolan M."/>
            <person name="Davis M.J."/>
            <person name="Wilming L.G."/>
            <person name="Aidinis V."/>
            <person name="Allen J.E."/>
            <person name="Ambesi-Impiombato A."/>
            <person name="Apweiler R."/>
            <person name="Aturaliya R.N."/>
            <person name="Bailey T.L."/>
            <person name="Bansal M."/>
            <person name="Baxter L."/>
            <person name="Beisel K.W."/>
            <person name="Bersano T."/>
            <person name="Bono H."/>
            <person name="Chalk A.M."/>
            <person name="Chiu K.P."/>
            <person name="Choudhary V."/>
            <person name="Christoffels A."/>
            <person name="Clutterbuck D.R."/>
            <person name="Crowe M.L."/>
            <person name="Dalla E."/>
            <person name="Dalrymple B.P."/>
            <person name="de Bono B."/>
            <person name="Della Gatta G."/>
            <person name="di Bernardo D."/>
            <person name="Down T."/>
            <person name="Engstrom P."/>
            <person name="Fagiolini M."/>
            <person name="Faulkner G."/>
            <person name="Fletcher C.F."/>
            <person name="Fukushima T."/>
            <person name="Furuno M."/>
            <person name="Futaki S."/>
            <person name="Gariboldi M."/>
            <person name="Georgii-Hemming P."/>
            <person name="Gingeras T.R."/>
            <person name="Gojobori T."/>
            <person name="Green R.E."/>
            <person name="Gustincich S."/>
            <person name="Harbers M."/>
            <person name="Hayashi Y."/>
            <person name="Hensch T.K."/>
            <person name="Hirokawa N."/>
            <person name="Hill D."/>
            <person name="Huminiecki L."/>
            <person name="Iacono M."/>
            <person name="Ikeo K."/>
            <person name="Iwama A."/>
            <person name="Ishikawa T."/>
            <person name="Jakt M."/>
            <person name="Kanapin A."/>
            <person name="Katoh M."/>
            <person name="Kawasawa Y."/>
            <person name="Kelso J."/>
            <person name="Kitamura H."/>
            <person name="Kitano H."/>
            <person name="Kollias G."/>
            <person name="Krishnan S.P."/>
            <person name="Kruger A."/>
            <person name="Kummerfeld S.K."/>
            <person name="Kurochkin I.V."/>
            <person name="Lareau L.F."/>
            <person name="Lazarevic D."/>
            <person name="Lipovich L."/>
            <person name="Liu J."/>
            <person name="Liuni S."/>
            <person name="McWilliam S."/>
            <person name="Madan Babu M."/>
            <person name="Madera M."/>
            <person name="Marchionni L."/>
            <person name="Matsuda H."/>
            <person name="Matsuzawa S."/>
            <person name="Miki H."/>
            <person name="Mignone F."/>
            <person name="Miyake S."/>
            <person name="Morris K."/>
            <person name="Mottagui-Tabar S."/>
            <person name="Mulder N."/>
            <person name="Nakano N."/>
            <person name="Nakauchi H."/>
            <person name="Ng P."/>
            <person name="Nilsson R."/>
            <person name="Nishiguchi S."/>
            <person name="Nishikawa S."/>
            <person name="Nori F."/>
            <person name="Ohara O."/>
            <person name="Okazaki Y."/>
            <person name="Orlando V."/>
            <person name="Pang K.C."/>
            <person name="Pavan W.J."/>
            <person name="Pavesi G."/>
            <person name="Pesole G."/>
            <person name="Petrovsky N."/>
            <person name="Piazza S."/>
            <person name="Reed J."/>
            <person name="Reid J.F."/>
            <person name="Ring B.Z."/>
            <person name="Ringwald M."/>
            <person name="Rost B."/>
            <person name="Ruan Y."/>
            <person name="Salzberg S.L."/>
            <person name="Sandelin A."/>
            <person name="Schneider C."/>
            <person name="Schoenbach C."/>
            <person name="Sekiguchi K."/>
            <person name="Semple C.A."/>
            <person name="Seno S."/>
            <person name="Sessa L."/>
            <person name="Sheng Y."/>
            <person name="Shibata Y."/>
            <person name="Shimada H."/>
            <person name="Shimada K."/>
            <person name="Silva D."/>
            <person name="Sinclair B."/>
            <person name="Sperling S."/>
            <person name="Stupka E."/>
            <person name="Sugiura K."/>
            <person name="Sultana R."/>
            <person name="Takenaka Y."/>
            <person name="Taki K."/>
            <person name="Tammoja K."/>
            <person name="Tan S.L."/>
            <person name="Tang S."/>
            <person name="Taylor M.S."/>
            <person name="Tegner J."/>
            <person name="Teichmann S.A."/>
            <person name="Ueda H.R."/>
            <person name="van Nimwegen E."/>
            <person name="Verardo R."/>
            <person name="Wei C.L."/>
            <person name="Yagi K."/>
            <person name="Yamanishi H."/>
            <person name="Zabarovsky E."/>
            <person name="Zhu S."/>
            <person name="Zimmer A."/>
            <person name="Hide W."/>
            <person name="Bult C."/>
            <person name="Grimmond S.M."/>
            <person name="Teasdale R.D."/>
            <person name="Liu E.T."/>
            <person name="Brusic V."/>
            <person name="Quackenbush J."/>
            <person name="Wahlestedt C."/>
            <person name="Mattick J.S."/>
            <person name="Hume D.A."/>
            <person name="Kai C."/>
            <person name="Sasaki D."/>
            <person name="Tomaru Y."/>
            <person name="Fukuda S."/>
            <person name="Kanamori-Katayama M."/>
            <person name="Suzuki M."/>
            <person name="Aoki J."/>
            <person name="Arakawa T."/>
            <person name="Iida J."/>
            <person name="Imamura K."/>
            <person name="Itoh M."/>
            <person name="Kato T."/>
            <person name="Kawaji H."/>
            <person name="Kawagashira N."/>
            <person name="Kawashima T."/>
            <person name="Kojima M."/>
            <person name="Kondo S."/>
            <person name="Konno H."/>
            <person name="Nakano K."/>
            <person name="Ninomiya N."/>
            <person name="Nishio T."/>
            <person name="Okada M."/>
            <person name="Plessy C."/>
            <person name="Shibata K."/>
            <person name="Shiraki T."/>
            <person name="Suzuki S."/>
            <person name="Tagami M."/>
            <person name="Waki K."/>
            <person name="Watahiki A."/>
            <person name="Okamura-Oho Y."/>
            <person name="Suzuki H."/>
            <person name="Kawai J."/>
            <person name="Hayashizaki Y."/>
        </authorList>
    </citation>
    <scope>NUCLEOTIDE SEQUENCE [LARGE SCALE MRNA]</scope>
    <source>
        <strain>C57BL/6J</strain>
    </source>
</reference>
<reference key="4">
    <citation type="journal article" date="2004" name="Genome Res.">
        <title>The status, quality, and expansion of the NIH full-length cDNA project: the Mammalian Gene Collection (MGC).</title>
        <authorList>
            <consortium name="The MGC Project Team"/>
        </authorList>
    </citation>
    <scope>NUCLEOTIDE SEQUENCE [LARGE SCALE MRNA]</scope>
    <source>
        <strain>C57BL/6J</strain>
        <tissue>Brain</tissue>
    </source>
</reference>
<reference key="5">
    <citation type="journal article" date="2008" name="Cell">
        <title>A mitochondrial protein compendium elucidates complex I disease biology.</title>
        <authorList>
            <person name="Pagliarini D.J."/>
            <person name="Calvo S.E."/>
            <person name="Chang B."/>
            <person name="Sheth S.A."/>
            <person name="Vafai S.B."/>
            <person name="Ong S.E."/>
            <person name="Walford G.A."/>
            <person name="Sugiana C."/>
            <person name="Boneh A."/>
            <person name="Chen W.K."/>
            <person name="Hill D.E."/>
            <person name="Vidal M."/>
            <person name="Evans J.G."/>
            <person name="Thorburn D.R."/>
            <person name="Carr S.A."/>
            <person name="Mootha V.K."/>
        </authorList>
    </citation>
    <scope>SUBCELLULAR LOCATION [LARGE SCALE ANALYSIS]</scope>
</reference>
<reference key="6">
    <citation type="journal article" date="2009" name="Mol. Cell. Proteomics">
        <title>Large scale localization of protein phosphorylation by use of electron capture dissociation mass spectrometry.</title>
        <authorList>
            <person name="Sweet S.M."/>
            <person name="Bailey C.M."/>
            <person name="Cunningham D.L."/>
            <person name="Heath J.K."/>
            <person name="Cooper H.J."/>
        </authorList>
    </citation>
    <scope>PHOSPHORYLATION [LARGE SCALE ANALYSIS] AT SER-43</scope>
    <scope>IDENTIFICATION BY MASS SPECTROMETRY [LARGE SCALE ANALYSIS]</scope>
    <source>
        <tissue>Embryonic fibroblast</tissue>
    </source>
</reference>
<reference key="7">
    <citation type="journal article" date="2010" name="Cell">
        <title>A tissue-specific atlas of mouse protein phosphorylation and expression.</title>
        <authorList>
            <person name="Huttlin E.L."/>
            <person name="Jedrychowski M.P."/>
            <person name="Elias J.E."/>
            <person name="Goswami T."/>
            <person name="Rad R."/>
            <person name="Beausoleil S.A."/>
            <person name="Villen J."/>
            <person name="Haas W."/>
            <person name="Sowa M.E."/>
            <person name="Gygi S.P."/>
        </authorList>
    </citation>
    <scope>PHOSPHORYLATION [LARGE SCALE ANALYSIS] AT SER-43</scope>
    <scope>IDENTIFICATION BY MASS SPECTROMETRY [LARGE SCALE ANALYSIS]</scope>
    <source>
        <tissue>Brain</tissue>
        <tissue>Brown adipose tissue</tissue>
        <tissue>Heart</tissue>
        <tissue>Kidney</tissue>
        <tissue>Liver</tissue>
        <tissue>Lung</tissue>
        <tissue>Pancreas</tissue>
        <tissue>Spleen</tissue>
        <tissue>Testis</tissue>
    </source>
</reference>
<reference key="8">
    <citation type="journal article" date="2011" name="J. Biol. Chem.">
        <title>Extremely conserved ATP- or ADP-dependent enzymatic system for nicotinamide nucleotide repair.</title>
        <authorList>
            <person name="Marbaix A.Y."/>
            <person name="Noel G."/>
            <person name="Detroux A.M."/>
            <person name="Vertommen D."/>
            <person name="Van Schaftingen E."/>
            <person name="Linster C.L."/>
        </authorList>
    </citation>
    <scope>FUNCTION</scope>
    <scope>CATALYTIC ACTIVITY</scope>
    <scope>BIOPHYSICOCHEMICAL PROPERTIES</scope>
</reference>
<reference key="9">
    <citation type="journal article" date="2013" name="Mol. Cell">
        <title>SIRT5-mediated lysine desuccinylation impacts diverse metabolic pathways.</title>
        <authorList>
            <person name="Park J."/>
            <person name="Chen Y."/>
            <person name="Tishkoff D.X."/>
            <person name="Peng C."/>
            <person name="Tan M."/>
            <person name="Dai L."/>
            <person name="Xie Z."/>
            <person name="Zhang Y."/>
            <person name="Zwaans B.M."/>
            <person name="Skinner M.E."/>
            <person name="Lombard D.B."/>
            <person name="Zhao Y."/>
        </authorList>
    </citation>
    <scope>SUCCINYLATION [LARGE SCALE ANALYSIS] AT LYS-138</scope>
    <scope>IDENTIFICATION BY MASS SPECTROMETRY [LARGE SCALE ANALYSIS]</scope>
    <source>
        <tissue>Liver</tissue>
    </source>
</reference>
<proteinExistence type="evidence at protein level"/>
<feature type="transit peptide" description="Mitochondrion" evidence="2">
    <location>
        <begin position="1"/>
        <end position="53"/>
    </location>
</feature>
<feature type="chain" id="PRO_0000292423" description="NAD(P)H-hydrate epimerase">
    <location>
        <begin position="54"/>
        <end position="282"/>
    </location>
</feature>
<feature type="domain" description="YjeF N-terminal" evidence="2">
    <location>
        <begin position="59"/>
        <end position="269"/>
    </location>
</feature>
<feature type="binding site" evidence="2">
    <location>
        <begin position="113"/>
        <end position="117"/>
    </location>
    <ligand>
        <name>(6S)-NADPHX</name>
        <dbReference type="ChEBI" id="CHEBI:64076"/>
    </ligand>
</feature>
<feature type="binding site" evidence="2">
    <location>
        <position position="114"/>
    </location>
    <ligand>
        <name>K(+)</name>
        <dbReference type="ChEBI" id="CHEBI:29103"/>
    </ligand>
</feature>
<feature type="binding site" evidence="2">
    <location>
        <position position="179"/>
    </location>
    <ligand>
        <name>K(+)</name>
        <dbReference type="ChEBI" id="CHEBI:29103"/>
    </ligand>
</feature>
<feature type="binding site" evidence="2">
    <location>
        <begin position="183"/>
        <end position="189"/>
    </location>
    <ligand>
        <name>(6S)-NADPHX</name>
        <dbReference type="ChEBI" id="CHEBI:64076"/>
    </ligand>
</feature>
<feature type="binding site" evidence="2">
    <location>
        <position position="212"/>
    </location>
    <ligand>
        <name>(6S)-NADPHX</name>
        <dbReference type="ChEBI" id="CHEBI:64076"/>
    </ligand>
</feature>
<feature type="binding site" evidence="2">
    <location>
        <position position="215"/>
    </location>
    <ligand>
        <name>K(+)</name>
        <dbReference type="ChEBI" id="CHEBI:29103"/>
    </ligand>
</feature>
<feature type="modified residue" description="Phosphoserine; by PKA" evidence="3 7 8">
    <location>
        <position position="43"/>
    </location>
</feature>
<feature type="modified residue" description="N6-succinyllysine" evidence="9">
    <location>
        <position position="138"/>
    </location>
</feature>
<feature type="helix" evidence="10">
    <location>
        <begin position="56"/>
        <end position="67"/>
    </location>
</feature>
<feature type="turn" evidence="10">
    <location>
        <begin position="68"/>
        <end position="70"/>
    </location>
</feature>
<feature type="helix" evidence="10">
    <location>
        <begin position="74"/>
        <end position="92"/>
    </location>
</feature>
<feature type="helix" evidence="10">
    <location>
        <begin position="95"/>
        <end position="97"/>
    </location>
</feature>
<feature type="strand" evidence="10">
    <location>
        <begin position="98"/>
        <end position="102"/>
    </location>
</feature>
<feature type="strand" evidence="10">
    <location>
        <begin position="104"/>
        <end position="109"/>
    </location>
</feature>
<feature type="helix" evidence="10">
    <location>
        <begin position="113"/>
        <end position="127"/>
    </location>
</feature>
<feature type="strand" evidence="10">
    <location>
        <begin position="131"/>
        <end position="135"/>
    </location>
</feature>
<feature type="helix" evidence="10">
    <location>
        <begin position="143"/>
        <end position="154"/>
    </location>
</feature>
<feature type="strand" evidence="11">
    <location>
        <begin position="159"/>
        <end position="162"/>
    </location>
</feature>
<feature type="helix" evidence="10">
    <location>
        <begin position="167"/>
        <end position="173"/>
    </location>
</feature>
<feature type="strand" evidence="10">
    <location>
        <begin position="175"/>
        <end position="181"/>
    </location>
</feature>
<feature type="helix" evidence="10">
    <location>
        <begin position="194"/>
        <end position="202"/>
    </location>
</feature>
<feature type="strand" evidence="10">
    <location>
        <begin position="208"/>
        <end position="213"/>
    </location>
</feature>
<feature type="turn" evidence="10">
    <location>
        <begin position="219"/>
        <end position="221"/>
    </location>
</feature>
<feature type="strand" evidence="10">
    <location>
        <begin position="230"/>
        <end position="237"/>
    </location>
</feature>
<feature type="helix" evidence="10">
    <location>
        <begin position="240"/>
        <end position="244"/>
    </location>
</feature>
<feature type="strand" evidence="10">
    <location>
        <begin position="247"/>
        <end position="253"/>
    </location>
</feature>
<feature type="helix" evidence="10">
    <location>
        <begin position="259"/>
        <end position="264"/>
    </location>
</feature>
<feature type="strand" evidence="10">
    <location>
        <begin position="277"/>
        <end position="280"/>
    </location>
</feature>
<gene>
    <name evidence="1" type="primary">Naxe</name>
    <name type="synonym">Aibp</name>
    <name type="synonym">Apoa1bp</name>
</gene>
<dbReference type="EC" id="5.1.99.6" evidence="5"/>
<dbReference type="EMBL" id="AJ344092">
    <property type="protein sequence ID" value="CAC86966.1"/>
    <property type="molecule type" value="mRNA"/>
</dbReference>
<dbReference type="EMBL" id="AY566271">
    <property type="protein sequence ID" value="AAT70236.1"/>
    <property type="molecule type" value="mRNA"/>
</dbReference>
<dbReference type="EMBL" id="AK159846">
    <property type="protein sequence ID" value="BAE35424.1"/>
    <property type="molecule type" value="mRNA"/>
</dbReference>
<dbReference type="EMBL" id="BC058362">
    <property type="protein sequence ID" value="AAH58362.1"/>
    <property type="molecule type" value="mRNA"/>
</dbReference>
<dbReference type="CCDS" id="CCDS17464.1"/>
<dbReference type="RefSeq" id="NP_659146.1">
    <property type="nucleotide sequence ID" value="NM_144897.4"/>
</dbReference>
<dbReference type="PDB" id="2DG2">
    <property type="method" value="X-ray"/>
    <property type="resolution" value="2.45 A"/>
    <property type="chains" value="A/B/C/D/E/F=25-282"/>
</dbReference>
<dbReference type="PDB" id="2O8N">
    <property type="method" value="X-ray"/>
    <property type="resolution" value="2.00 A"/>
    <property type="chains" value="A=25-282"/>
</dbReference>
<dbReference type="PDB" id="3RNO">
    <property type="method" value="X-ray"/>
    <property type="resolution" value="2.50 A"/>
    <property type="chains" value="A=25-282"/>
</dbReference>
<dbReference type="PDB" id="3RO7">
    <property type="method" value="X-ray"/>
    <property type="resolution" value="2.50 A"/>
    <property type="chains" value="A=25-282"/>
</dbReference>
<dbReference type="PDB" id="3ROE">
    <property type="method" value="X-ray"/>
    <property type="resolution" value="2.11 A"/>
    <property type="chains" value="A/B/C/D/E/F=25-282"/>
</dbReference>
<dbReference type="PDB" id="3ROG">
    <property type="method" value="X-ray"/>
    <property type="resolution" value="2.05 A"/>
    <property type="chains" value="A=25-282"/>
</dbReference>
<dbReference type="PDB" id="3ROX">
    <property type="method" value="X-ray"/>
    <property type="resolution" value="2.40 A"/>
    <property type="chains" value="A=25-282"/>
</dbReference>
<dbReference type="PDB" id="3ROZ">
    <property type="method" value="X-ray"/>
    <property type="resolution" value="2.80 A"/>
    <property type="chains" value="A=25-282"/>
</dbReference>
<dbReference type="PDBsum" id="2DG2"/>
<dbReference type="PDBsum" id="2O8N"/>
<dbReference type="PDBsum" id="3RNO"/>
<dbReference type="PDBsum" id="3RO7"/>
<dbReference type="PDBsum" id="3ROE"/>
<dbReference type="PDBsum" id="3ROG"/>
<dbReference type="PDBsum" id="3ROX"/>
<dbReference type="PDBsum" id="3ROZ"/>
<dbReference type="SMR" id="Q8K4Z3"/>
<dbReference type="BioGRID" id="232930">
    <property type="interactions" value="4"/>
</dbReference>
<dbReference type="DIP" id="DIP-59952N"/>
<dbReference type="ELM" id="Q8K4Z3"/>
<dbReference type="FunCoup" id="Q8K4Z3">
    <property type="interactions" value="1651"/>
</dbReference>
<dbReference type="STRING" id="10090.ENSMUSP00000029708"/>
<dbReference type="GlyGen" id="Q8K4Z3">
    <property type="glycosylation" value="1 site, 1 O-linked glycan (1 site)"/>
</dbReference>
<dbReference type="iPTMnet" id="Q8K4Z3"/>
<dbReference type="PhosphoSitePlus" id="Q8K4Z3"/>
<dbReference type="SwissPalm" id="Q8K4Z3"/>
<dbReference type="REPRODUCTION-2DPAGE" id="Q8K4Z3"/>
<dbReference type="jPOST" id="Q8K4Z3"/>
<dbReference type="PaxDb" id="10090-ENSMUSP00000029708"/>
<dbReference type="PeptideAtlas" id="Q8K4Z3"/>
<dbReference type="ProteomicsDB" id="253089"/>
<dbReference type="Pumba" id="Q8K4Z3"/>
<dbReference type="TopDownProteomics" id="Q8K4Z3"/>
<dbReference type="Antibodypedia" id="34221">
    <property type="antibodies" value="214 antibodies from 28 providers"/>
</dbReference>
<dbReference type="DNASU" id="246703"/>
<dbReference type="Ensembl" id="ENSMUST00000029708.8">
    <property type="protein sequence ID" value="ENSMUSP00000029708.7"/>
    <property type="gene ID" value="ENSMUSG00000028070.8"/>
</dbReference>
<dbReference type="GeneID" id="246703"/>
<dbReference type="KEGG" id="mmu:246703"/>
<dbReference type="UCSC" id="uc008ptu.1">
    <property type="organism name" value="mouse"/>
</dbReference>
<dbReference type="AGR" id="MGI:2180167"/>
<dbReference type="CTD" id="128240"/>
<dbReference type="MGI" id="MGI:2180167">
    <property type="gene designation" value="Naxe"/>
</dbReference>
<dbReference type="VEuPathDB" id="HostDB:ENSMUSG00000028070"/>
<dbReference type="eggNOG" id="KOG2585">
    <property type="taxonomic scope" value="Eukaryota"/>
</dbReference>
<dbReference type="GeneTree" id="ENSGT00390000007227"/>
<dbReference type="HOGENOM" id="CLU_024853_3_0_1"/>
<dbReference type="InParanoid" id="Q8K4Z3"/>
<dbReference type="OMA" id="RHLFHYG"/>
<dbReference type="OrthoDB" id="10064708at2759"/>
<dbReference type="PhylomeDB" id="Q8K4Z3"/>
<dbReference type="TreeFam" id="TF300197"/>
<dbReference type="BRENDA" id="5.1.99.6">
    <property type="organism ID" value="3474"/>
</dbReference>
<dbReference type="Reactome" id="R-MMU-197264">
    <property type="pathway name" value="Nicotinamide salvaging"/>
</dbReference>
<dbReference type="SABIO-RK" id="Q8K4Z3"/>
<dbReference type="BioGRID-ORCS" id="246703">
    <property type="hits" value="3 hits in 78 CRISPR screens"/>
</dbReference>
<dbReference type="ChiTaRS" id="Apoa1bp">
    <property type="organism name" value="mouse"/>
</dbReference>
<dbReference type="EvolutionaryTrace" id="Q8K4Z3"/>
<dbReference type="PRO" id="PR:Q8K4Z3"/>
<dbReference type="Proteomes" id="UP000000589">
    <property type="component" value="Chromosome 3"/>
</dbReference>
<dbReference type="RNAct" id="Q8K4Z3">
    <property type="molecule type" value="protein"/>
</dbReference>
<dbReference type="Bgee" id="ENSMUSG00000028070">
    <property type="expression patterns" value="Expressed in choroid plexus of fourth ventricle and 260 other cell types or tissues"/>
</dbReference>
<dbReference type="GO" id="GO:0044297">
    <property type="term" value="C:cell body"/>
    <property type="evidence" value="ECO:0000314"/>
    <property type="project" value="MGI"/>
</dbReference>
<dbReference type="GO" id="GO:0005929">
    <property type="term" value="C:cilium"/>
    <property type="evidence" value="ECO:0000314"/>
    <property type="project" value="MGI"/>
</dbReference>
<dbReference type="GO" id="GO:0005829">
    <property type="term" value="C:cytosol"/>
    <property type="evidence" value="ECO:0000314"/>
    <property type="project" value="FlyBase"/>
</dbReference>
<dbReference type="GO" id="GO:0005615">
    <property type="term" value="C:extracellular space"/>
    <property type="evidence" value="ECO:0000314"/>
    <property type="project" value="MGI"/>
</dbReference>
<dbReference type="GO" id="GO:0005739">
    <property type="term" value="C:mitochondrion"/>
    <property type="evidence" value="ECO:0000314"/>
    <property type="project" value="MGI"/>
</dbReference>
<dbReference type="GO" id="GO:0005634">
    <property type="term" value="C:nucleus"/>
    <property type="evidence" value="ECO:0000314"/>
    <property type="project" value="MGI"/>
</dbReference>
<dbReference type="GO" id="GO:0042802">
    <property type="term" value="F:identical protein binding"/>
    <property type="evidence" value="ECO:0000353"/>
    <property type="project" value="MGI"/>
</dbReference>
<dbReference type="GO" id="GO:0046872">
    <property type="term" value="F:metal ion binding"/>
    <property type="evidence" value="ECO:0007669"/>
    <property type="project" value="UniProtKB-KW"/>
</dbReference>
<dbReference type="GO" id="GO:0052856">
    <property type="term" value="F:NAD(P)HX epimerase activity"/>
    <property type="evidence" value="ECO:0000266"/>
    <property type="project" value="MGI"/>
</dbReference>
<dbReference type="GO" id="GO:0000166">
    <property type="term" value="F:nucleotide binding"/>
    <property type="evidence" value="ECO:0007669"/>
    <property type="project" value="UniProtKB-KW"/>
</dbReference>
<dbReference type="GO" id="GO:0006869">
    <property type="term" value="P:lipid transport"/>
    <property type="evidence" value="ECO:0007669"/>
    <property type="project" value="UniProtKB-KW"/>
</dbReference>
<dbReference type="GO" id="GO:0031580">
    <property type="term" value="P:membrane raft distribution"/>
    <property type="evidence" value="ECO:0000250"/>
    <property type="project" value="UniProtKB"/>
</dbReference>
<dbReference type="GO" id="GO:0110051">
    <property type="term" value="P:metabolite repair"/>
    <property type="evidence" value="ECO:0007669"/>
    <property type="project" value="Ensembl"/>
</dbReference>
<dbReference type="GO" id="GO:0016525">
    <property type="term" value="P:negative regulation of angiogenesis"/>
    <property type="evidence" value="ECO:0000250"/>
    <property type="project" value="UniProtKB"/>
</dbReference>
<dbReference type="GO" id="GO:0046496">
    <property type="term" value="P:nicotinamide nucleotide metabolic process"/>
    <property type="evidence" value="ECO:0000250"/>
    <property type="project" value="UniProtKB"/>
</dbReference>
<dbReference type="GO" id="GO:0010874">
    <property type="term" value="P:regulation of cholesterol efflux"/>
    <property type="evidence" value="ECO:0000250"/>
    <property type="project" value="UniProtKB"/>
</dbReference>
<dbReference type="GO" id="GO:0002040">
    <property type="term" value="P:sprouting angiogenesis"/>
    <property type="evidence" value="ECO:0000250"/>
    <property type="project" value="UniProtKB"/>
</dbReference>
<dbReference type="FunFam" id="3.40.50.10260:FF:000002">
    <property type="entry name" value="NAD(P)H-hydrate epimerase"/>
    <property type="match status" value="1"/>
</dbReference>
<dbReference type="Gene3D" id="3.40.50.10260">
    <property type="entry name" value="YjeF N-terminal domain"/>
    <property type="match status" value="1"/>
</dbReference>
<dbReference type="HAMAP" id="MF_01966">
    <property type="entry name" value="NADHX_epimerase"/>
    <property type="match status" value="1"/>
</dbReference>
<dbReference type="InterPro" id="IPR004443">
    <property type="entry name" value="YjeF_N_dom"/>
</dbReference>
<dbReference type="InterPro" id="IPR036652">
    <property type="entry name" value="YjeF_N_dom_sf"/>
</dbReference>
<dbReference type="InterPro" id="IPR032976">
    <property type="entry name" value="YJEFN_prot_NAXE-like"/>
</dbReference>
<dbReference type="NCBIfam" id="TIGR00197">
    <property type="entry name" value="yjeF_nterm"/>
    <property type="match status" value="1"/>
</dbReference>
<dbReference type="PANTHER" id="PTHR13232">
    <property type="entry name" value="NAD(P)H-HYDRATE EPIMERASE"/>
    <property type="match status" value="1"/>
</dbReference>
<dbReference type="PANTHER" id="PTHR13232:SF11">
    <property type="entry name" value="NAD(P)H-HYDRATE EPIMERASE"/>
    <property type="match status" value="1"/>
</dbReference>
<dbReference type="Pfam" id="PF03853">
    <property type="entry name" value="YjeF_N"/>
    <property type="match status" value="1"/>
</dbReference>
<dbReference type="SUPFAM" id="SSF64153">
    <property type="entry name" value="YjeF N-terminal domain-like"/>
    <property type="match status" value="1"/>
</dbReference>
<dbReference type="PROSITE" id="PS51385">
    <property type="entry name" value="YJEF_N"/>
    <property type="match status" value="1"/>
</dbReference>
<comment type="function">
    <text evidence="1 2 5">Catalyzes the epimerization of the S- and R-forms of NAD(P)HX, a damaged form of NAD(P)H that is a result of enzymatic or heat-dependent hydration (By similarity) (PubMed:21994945). This is a prerequisite for the S-specific NAD(P)H-hydrate dehydratase to allow the repair of both epimers of NAD(P)HX (By similarity). Accelerates cholesterol efflux from endothelial cells to high-density lipoprotein (HDL) and thereby regulates angiogenesis (By similarity).</text>
</comment>
<comment type="catalytic activity">
    <reaction evidence="5">
        <text>(6R)-NADHX = (6S)-NADHX</text>
        <dbReference type="Rhea" id="RHEA:32215"/>
        <dbReference type="ChEBI" id="CHEBI:64074"/>
        <dbReference type="ChEBI" id="CHEBI:64075"/>
        <dbReference type="EC" id="5.1.99.6"/>
    </reaction>
</comment>
<comment type="catalytic activity">
    <reaction evidence="5">
        <text>(6R)-NADPHX = (6S)-NADPHX</text>
        <dbReference type="Rhea" id="RHEA:32227"/>
        <dbReference type="ChEBI" id="CHEBI:64076"/>
        <dbReference type="ChEBI" id="CHEBI:64077"/>
        <dbReference type="EC" id="5.1.99.6"/>
    </reaction>
</comment>
<comment type="cofactor">
    <cofactor evidence="2">
        <name>K(+)</name>
        <dbReference type="ChEBI" id="CHEBI:29103"/>
    </cofactor>
    <text evidence="2">Binds 1 potassium ion per subunit.</text>
</comment>
<comment type="biophysicochemical properties">
    <kinetics>
        <KM evidence="5">1.6 uM for (R)-NADHX</KM>
        <KM evidence="5">0.33 uM for (R)-NADPHX</KM>
        <Vmax evidence="5">0.26 umol/min/mg enzyme toward (R)-NADHX</Vmax>
        <Vmax evidence="5">1.2 umol/min/mg enzyme toward (R)-NADPHX</Vmax>
    </kinetics>
</comment>
<comment type="subunit">
    <text evidence="1 3">Homodimer (PubMed:18202122). Interacts with APOA1 and APOA2 (By similarity).</text>
</comment>
<comment type="subcellular location">
    <subcellularLocation>
        <location evidence="2">Mitochondrion</location>
    </subcellularLocation>
    <subcellularLocation>
        <location evidence="2 3 4">Secreted</location>
    </subcellularLocation>
    <text>In sperm, secretion gradually increases during capacitation.</text>
</comment>
<comment type="tissue specificity">
    <text evidence="3">Detected in testis and sperm (at protein level). Expressed at high levels in heart, liver, kidney, and testis.</text>
</comment>
<comment type="PTM">
    <text evidence="2 3">Undergoes physiological phosphorylation during sperm capacitation, downstream to PKA activation.</text>
</comment>
<comment type="similarity">
    <text evidence="2">Belongs to the NnrE/AIBP family.</text>
</comment>
<sequence>MSGLRTLLGLGLLVAGSRLPRVISQQSVCRARPIWWGTQRRGSETMAGAAVKYLSQEEAQAVDQELFNEYQFSVDQLMELAGLSCATAIAKAYPPTSMSKSPPTVLVICGPGNNGGDGLVCARHLKLFGYQPTIYYPKRPNKPLFTGLVTQCQKMDIPFLGEMPPEPMMVDELYELVVDAIFGFSFKGDVREPFHSILSVLSGLTVPIASIDIPSGWDVEKGNPSGIQPDLLISLTAPKKSATHFTGRYHYLGGRFVPPALEKKYQLNLPSYPDTECVYRLQ</sequence>
<name>NNRE_MOUSE</name>
<protein>
    <recommendedName>
        <fullName evidence="2">NAD(P)H-hydrate epimerase</fullName>
        <ecNumber evidence="5">5.1.99.6</ecNumber>
    </recommendedName>
    <alternativeName>
        <fullName evidence="2 6">Apolipoprotein A-I-binding protein</fullName>
        <shortName evidence="2">AI-BP</shortName>
    </alternativeName>
    <alternativeName>
        <fullName evidence="1 6">NAD(P)HX epimerase</fullName>
    </alternativeName>
</protein>
<accession>Q8K4Z3</accession>
<evidence type="ECO:0000250" key="1">
    <source>
        <dbReference type="UniProtKB" id="Q8NCW5"/>
    </source>
</evidence>
<evidence type="ECO:0000255" key="2">
    <source>
        <dbReference type="HAMAP-Rule" id="MF_03159"/>
    </source>
</evidence>
<evidence type="ECO:0000269" key="3">
    <source>
    </source>
</evidence>
<evidence type="ECO:0000269" key="4">
    <source>
    </source>
</evidence>
<evidence type="ECO:0000269" key="5">
    <source>
    </source>
</evidence>
<evidence type="ECO:0000303" key="6">
    <source>
    </source>
</evidence>
<evidence type="ECO:0007744" key="7">
    <source>
    </source>
</evidence>
<evidence type="ECO:0007744" key="8">
    <source>
    </source>
</evidence>
<evidence type="ECO:0007744" key="9">
    <source>
    </source>
</evidence>
<evidence type="ECO:0007829" key="10">
    <source>
        <dbReference type="PDB" id="2O8N"/>
    </source>
</evidence>
<evidence type="ECO:0007829" key="11">
    <source>
        <dbReference type="PDB" id="3ROZ"/>
    </source>
</evidence>
<keyword id="KW-0002">3D-structure</keyword>
<keyword id="KW-0413">Isomerase</keyword>
<keyword id="KW-0445">Lipid transport</keyword>
<keyword id="KW-0479">Metal-binding</keyword>
<keyword id="KW-0496">Mitochondrion</keyword>
<keyword id="KW-0520">NAD</keyword>
<keyword id="KW-0521">NADP</keyword>
<keyword id="KW-0547">Nucleotide-binding</keyword>
<keyword id="KW-0597">Phosphoprotein</keyword>
<keyword id="KW-0630">Potassium</keyword>
<keyword id="KW-1185">Reference proteome</keyword>
<keyword id="KW-0964">Secreted</keyword>
<keyword id="KW-0809">Transit peptide</keyword>
<keyword id="KW-0813">Transport</keyword>